<accession>Q1GDU2</accession>
<name>PCKA_RUEST</name>
<gene>
    <name evidence="1" type="primary">pckA</name>
    <name type="ordered locus">TM1040_2442</name>
</gene>
<keyword id="KW-0067">ATP-binding</keyword>
<keyword id="KW-0963">Cytoplasm</keyword>
<keyword id="KW-0210">Decarboxylase</keyword>
<keyword id="KW-0312">Gluconeogenesis</keyword>
<keyword id="KW-0456">Lyase</keyword>
<keyword id="KW-0464">Manganese</keyword>
<keyword id="KW-0479">Metal-binding</keyword>
<keyword id="KW-0547">Nucleotide-binding</keyword>
<keyword id="KW-1185">Reference proteome</keyword>
<feature type="chain" id="PRO_1000026361" description="Phosphoenolpyruvate carboxykinase (ATP)">
    <location>
        <begin position="1"/>
        <end position="532"/>
    </location>
</feature>
<feature type="binding site" evidence="1">
    <location>
        <position position="60"/>
    </location>
    <ligand>
        <name>substrate</name>
    </ligand>
</feature>
<feature type="binding site" evidence="1">
    <location>
        <position position="194"/>
    </location>
    <ligand>
        <name>substrate</name>
    </ligand>
</feature>
<feature type="binding site" evidence="1">
    <location>
        <position position="200"/>
    </location>
    <ligand>
        <name>ATP</name>
        <dbReference type="ChEBI" id="CHEBI:30616"/>
    </ligand>
</feature>
<feature type="binding site" evidence="1">
    <location>
        <position position="200"/>
    </location>
    <ligand>
        <name>Mn(2+)</name>
        <dbReference type="ChEBI" id="CHEBI:29035"/>
    </ligand>
</feature>
<feature type="binding site" evidence="1">
    <location>
        <position position="200"/>
    </location>
    <ligand>
        <name>substrate</name>
    </ligand>
</feature>
<feature type="binding site" evidence="1">
    <location>
        <position position="219"/>
    </location>
    <ligand>
        <name>ATP</name>
        <dbReference type="ChEBI" id="CHEBI:30616"/>
    </ligand>
</feature>
<feature type="binding site" evidence="1">
    <location>
        <position position="219"/>
    </location>
    <ligand>
        <name>Mn(2+)</name>
        <dbReference type="ChEBI" id="CHEBI:29035"/>
    </ligand>
</feature>
<feature type="binding site" evidence="1">
    <location>
        <begin position="237"/>
        <end position="245"/>
    </location>
    <ligand>
        <name>ATP</name>
        <dbReference type="ChEBI" id="CHEBI:30616"/>
    </ligand>
</feature>
<feature type="binding site" evidence="1">
    <location>
        <position position="258"/>
    </location>
    <ligand>
        <name>Mn(2+)</name>
        <dbReference type="ChEBI" id="CHEBI:29035"/>
    </ligand>
</feature>
<feature type="binding site" evidence="1">
    <location>
        <position position="286"/>
    </location>
    <ligand>
        <name>ATP</name>
        <dbReference type="ChEBI" id="CHEBI:30616"/>
    </ligand>
</feature>
<feature type="binding site" evidence="1">
    <location>
        <position position="324"/>
    </location>
    <ligand>
        <name>ATP</name>
        <dbReference type="ChEBI" id="CHEBI:30616"/>
    </ligand>
</feature>
<feature type="binding site" evidence="1">
    <location>
        <position position="324"/>
    </location>
    <ligand>
        <name>substrate</name>
    </ligand>
</feature>
<feature type="binding site" evidence="1">
    <location>
        <position position="449"/>
    </location>
    <ligand>
        <name>ATP</name>
        <dbReference type="ChEBI" id="CHEBI:30616"/>
    </ligand>
</feature>
<dbReference type="EC" id="4.1.1.49" evidence="1"/>
<dbReference type="EMBL" id="CP000377">
    <property type="protein sequence ID" value="ABF65174.1"/>
    <property type="molecule type" value="Genomic_DNA"/>
</dbReference>
<dbReference type="RefSeq" id="WP_011539761.1">
    <property type="nucleotide sequence ID" value="NC_008044.1"/>
</dbReference>
<dbReference type="SMR" id="Q1GDU2"/>
<dbReference type="STRING" id="292414.TM1040_2442"/>
<dbReference type="KEGG" id="sit:TM1040_2442"/>
<dbReference type="eggNOG" id="COG1866">
    <property type="taxonomic scope" value="Bacteria"/>
</dbReference>
<dbReference type="HOGENOM" id="CLU_018247_0_1_5"/>
<dbReference type="OrthoDB" id="9806325at2"/>
<dbReference type="UniPathway" id="UPA00138"/>
<dbReference type="Proteomes" id="UP000000636">
    <property type="component" value="Chromosome"/>
</dbReference>
<dbReference type="GO" id="GO:0005829">
    <property type="term" value="C:cytosol"/>
    <property type="evidence" value="ECO:0007669"/>
    <property type="project" value="TreeGrafter"/>
</dbReference>
<dbReference type="GO" id="GO:0005524">
    <property type="term" value="F:ATP binding"/>
    <property type="evidence" value="ECO:0007669"/>
    <property type="project" value="UniProtKB-UniRule"/>
</dbReference>
<dbReference type="GO" id="GO:0046872">
    <property type="term" value="F:metal ion binding"/>
    <property type="evidence" value="ECO:0007669"/>
    <property type="project" value="UniProtKB-KW"/>
</dbReference>
<dbReference type="GO" id="GO:0004612">
    <property type="term" value="F:phosphoenolpyruvate carboxykinase (ATP) activity"/>
    <property type="evidence" value="ECO:0007669"/>
    <property type="project" value="UniProtKB-UniRule"/>
</dbReference>
<dbReference type="GO" id="GO:0006094">
    <property type="term" value="P:gluconeogenesis"/>
    <property type="evidence" value="ECO:0007669"/>
    <property type="project" value="UniProtKB-UniRule"/>
</dbReference>
<dbReference type="CDD" id="cd00484">
    <property type="entry name" value="PEPCK_ATP"/>
    <property type="match status" value="1"/>
</dbReference>
<dbReference type="Gene3D" id="3.90.228.20">
    <property type="match status" value="1"/>
</dbReference>
<dbReference type="Gene3D" id="3.40.449.10">
    <property type="entry name" value="Phosphoenolpyruvate Carboxykinase, domain 1"/>
    <property type="match status" value="1"/>
</dbReference>
<dbReference type="Gene3D" id="2.170.8.10">
    <property type="entry name" value="Phosphoenolpyruvate Carboxykinase, domain 2"/>
    <property type="match status" value="1"/>
</dbReference>
<dbReference type="HAMAP" id="MF_00453">
    <property type="entry name" value="PEPCK_ATP"/>
    <property type="match status" value="1"/>
</dbReference>
<dbReference type="InterPro" id="IPR001272">
    <property type="entry name" value="PEP_carboxykinase_ATP"/>
</dbReference>
<dbReference type="InterPro" id="IPR013035">
    <property type="entry name" value="PEP_carboxykinase_C"/>
</dbReference>
<dbReference type="InterPro" id="IPR008210">
    <property type="entry name" value="PEP_carboxykinase_N"/>
</dbReference>
<dbReference type="NCBIfam" id="TIGR00224">
    <property type="entry name" value="pckA"/>
    <property type="match status" value="1"/>
</dbReference>
<dbReference type="NCBIfam" id="NF006820">
    <property type="entry name" value="PRK09344.1-2"/>
    <property type="match status" value="1"/>
</dbReference>
<dbReference type="NCBIfam" id="NF006821">
    <property type="entry name" value="PRK09344.1-3"/>
    <property type="match status" value="1"/>
</dbReference>
<dbReference type="NCBIfam" id="NF006822">
    <property type="entry name" value="PRK09344.1-4"/>
    <property type="match status" value="1"/>
</dbReference>
<dbReference type="PANTHER" id="PTHR30031:SF0">
    <property type="entry name" value="PHOSPHOENOLPYRUVATE CARBOXYKINASE (ATP)"/>
    <property type="match status" value="1"/>
</dbReference>
<dbReference type="PANTHER" id="PTHR30031">
    <property type="entry name" value="PHOSPHOENOLPYRUVATE CARBOXYKINASE ATP"/>
    <property type="match status" value="1"/>
</dbReference>
<dbReference type="Pfam" id="PF01293">
    <property type="entry name" value="PEPCK_ATP"/>
    <property type="match status" value="1"/>
</dbReference>
<dbReference type="PIRSF" id="PIRSF006294">
    <property type="entry name" value="PEP_crbxkin"/>
    <property type="match status" value="1"/>
</dbReference>
<dbReference type="SUPFAM" id="SSF68923">
    <property type="entry name" value="PEP carboxykinase N-terminal domain"/>
    <property type="match status" value="1"/>
</dbReference>
<dbReference type="SUPFAM" id="SSF53795">
    <property type="entry name" value="PEP carboxykinase-like"/>
    <property type="match status" value="1"/>
</dbReference>
<reference key="1">
    <citation type="submission" date="2006-05" db="EMBL/GenBank/DDBJ databases">
        <title>Complete sequence of chromosome of Silicibacter sp. TM1040.</title>
        <authorList>
            <consortium name="US DOE Joint Genome Institute"/>
            <person name="Copeland A."/>
            <person name="Lucas S."/>
            <person name="Lapidus A."/>
            <person name="Barry K."/>
            <person name="Detter J.C."/>
            <person name="Glavina del Rio T."/>
            <person name="Hammon N."/>
            <person name="Israni S."/>
            <person name="Dalin E."/>
            <person name="Tice H."/>
            <person name="Pitluck S."/>
            <person name="Brettin T."/>
            <person name="Bruce D."/>
            <person name="Han C."/>
            <person name="Tapia R."/>
            <person name="Goodwin L."/>
            <person name="Thompson L.S."/>
            <person name="Gilna P."/>
            <person name="Schmutz J."/>
            <person name="Larimer F."/>
            <person name="Land M."/>
            <person name="Hauser L."/>
            <person name="Kyrpides N."/>
            <person name="Kim E."/>
            <person name="Belas R."/>
            <person name="Moran M.A."/>
            <person name="Buchan A."/>
            <person name="Gonzalez J.M."/>
            <person name="Schell M.A."/>
            <person name="Sun F."/>
            <person name="Richardson P."/>
        </authorList>
    </citation>
    <scope>NUCLEOTIDE SEQUENCE [LARGE SCALE GENOMIC DNA]</scope>
    <source>
        <strain>TM1040</strain>
    </source>
</reference>
<comment type="function">
    <text evidence="1">Involved in the gluconeogenesis. Catalyzes the conversion of oxaloacetate (OAA) to phosphoenolpyruvate (PEP) through direct phosphoryl transfer between the nucleoside triphosphate and OAA.</text>
</comment>
<comment type="catalytic activity">
    <reaction evidence="1">
        <text>oxaloacetate + ATP = phosphoenolpyruvate + ADP + CO2</text>
        <dbReference type="Rhea" id="RHEA:18617"/>
        <dbReference type="ChEBI" id="CHEBI:16452"/>
        <dbReference type="ChEBI" id="CHEBI:16526"/>
        <dbReference type="ChEBI" id="CHEBI:30616"/>
        <dbReference type="ChEBI" id="CHEBI:58702"/>
        <dbReference type="ChEBI" id="CHEBI:456216"/>
        <dbReference type="EC" id="4.1.1.49"/>
    </reaction>
</comment>
<comment type="cofactor">
    <cofactor evidence="1">
        <name>Mn(2+)</name>
        <dbReference type="ChEBI" id="CHEBI:29035"/>
    </cofactor>
    <text evidence="1">Binds 1 Mn(2+) ion per subunit.</text>
</comment>
<comment type="pathway">
    <text evidence="1">Carbohydrate biosynthesis; gluconeogenesis.</text>
</comment>
<comment type="subcellular location">
    <subcellularLocation>
        <location evidence="1">Cytoplasm</location>
    </subcellularLocation>
</comment>
<comment type="similarity">
    <text evidence="1">Belongs to the phosphoenolpyruvate carboxykinase (ATP) family.</text>
</comment>
<organism>
    <name type="scientific">Ruegeria sp. (strain TM1040)</name>
    <name type="common">Silicibacter sp.</name>
    <dbReference type="NCBI Taxonomy" id="292414"/>
    <lineage>
        <taxon>Bacteria</taxon>
        <taxon>Pseudomonadati</taxon>
        <taxon>Pseudomonadota</taxon>
        <taxon>Alphaproteobacteria</taxon>
        <taxon>Rhodobacterales</taxon>
        <taxon>Roseobacteraceae</taxon>
        <taxon>Ruegeria</taxon>
    </lineage>
</organism>
<protein>
    <recommendedName>
        <fullName evidence="1">Phosphoenolpyruvate carboxykinase (ATP)</fullName>
        <shortName evidence="1">PCK</shortName>
        <shortName evidence="1">PEP carboxykinase</shortName>
        <shortName evidence="1">PEPCK</shortName>
        <ecNumber evidence="1">4.1.1.49</ecNumber>
    </recommendedName>
</protein>
<sequence length="532" mass="58436">MTSGRVNPNFRLEDQGIEGLGNVYYNLMEPALVQEALSRGEGNLGKGGAFLVTTGKFTGRSPKDKHVVKTASVADTIWWENNAEMSPEGFDALYADMVEHMKGRDYFVQDLVGGADPVHAINVRMVTELAWHNLFIRHLLRRPDREDLDDFIADFTIINCPSFQADPNKHNCRSETVIALNFDRKMILIGGTEYAGENKKSVFTLLNYLLPEKGIMPMHCSANHAKGNPVDTAVFFGLSGTGKTTLSADPDRVLIGDDEHGWASNGTFNFEGGCYAKTINLNPEAEPEIYATTEKFGTVIENMTFDPETFDLNFDDDSLTANMRCAYPLHYISNASASARGGHPKNIIMLTCDAFGVLPPIARLTPAQAMYHFLSGFTSKVAGTERGVTEPEPTFSTCFGAPFMPRRPEVYGNLLREKIAAHGATCWLVNTGWTGGAYGTGSRMPIKATRALLTAALDGSLANAEFRKDPNFGFDVPVAAPGVAEVLLDPRRTWDDKAAYDAQAEKLVQMFSDNFEQYLPYIDEDVKAAAIC</sequence>
<proteinExistence type="inferred from homology"/>
<evidence type="ECO:0000255" key="1">
    <source>
        <dbReference type="HAMAP-Rule" id="MF_00453"/>
    </source>
</evidence>